<gene>
    <name evidence="10 12" type="primary">hsd-1</name>
    <name evidence="12" type="ORF">Y6B3B.11</name>
</gene>
<sequence>MSIKRLSMRLKKGIHRSWNRMTSLEAGLEEEKEIKIVEEPEPRPWKVLITGGAGHLAENLVAKLEEMTRDSIRPKIREMLEKEMPAVISTKVDKEVEKRLPMYIQIVLVDVLEPRGRVLKHHVAFVKCSFDDECTMKTALEQVDTVYHLAAVGMTGQYARDRKACMDINAVGTMNLLIWARNSGVQRFIYTSSVGVVFSGEPMYNATEEVGYPDDFYNYYCESKAHAERIVQKASGHRMRTTVLRFNGIYGPGEKRVTERVVKFMLTGMWIATCKPNGVEAQTQLSSVANCIQGLVKAELALRWSDTPHGQIYNIMDKTPVGTFSFWTPLNIALGFSSSMITVPATPIRLFAYLSQIIADRMRIDPIVSVLEVDLLLVNNTFNIEKAERDLGYEPSVSAIPEIIEHYLHRLPPDVVRPKGRSDFYVKVAVLVLGTILIFVAVFSFTFWMYLIFQRLSRWNPF</sequence>
<feature type="chain" id="PRO_0000452999" description="3beta-hydroxysteroid dehydrogenase/Delta(5)-Delta(4) isomerase 1">
    <location>
        <begin position="1"/>
        <end position="462"/>
    </location>
</feature>
<feature type="transmembrane region" description="Helical" evidence="2">
    <location>
        <begin position="321"/>
        <end position="341"/>
    </location>
</feature>
<feature type="transmembrane region" description="Helical" evidence="2">
    <location>
        <begin position="428"/>
        <end position="448"/>
    </location>
</feature>
<feature type="active site" description="Proton donor" evidence="1">
    <location>
        <position position="224"/>
    </location>
</feature>
<feature type="binding site" evidence="1">
    <location>
        <begin position="51"/>
        <end position="56"/>
    </location>
    <ligand>
        <name>NAD(+)</name>
        <dbReference type="ChEBI" id="CHEBI:57540"/>
    </ligand>
</feature>
<feature type="binding site" evidence="1">
    <location>
        <position position="220"/>
    </location>
    <ligand>
        <name>NAD(+)</name>
        <dbReference type="ChEBI" id="CHEBI:57540"/>
    </ligand>
</feature>
<feature type="binding site" evidence="1">
    <location>
        <position position="224"/>
    </location>
    <ligand>
        <name>NAD(+)</name>
        <dbReference type="ChEBI" id="CHEBI:57540"/>
    </ligand>
</feature>
<name>HSD3B_CAEEL</name>
<protein>
    <recommendedName>
        <fullName>3beta-hydroxysteroid dehydrogenase/Delta(5)-Delta(4) isomerase 1</fullName>
        <shortName evidence="6 7">HSD-1</shortName>
        <ecNumber evidence="9">1.1.1.145</ecNumber>
        <ecNumber evidence="9">5.3.3.1</ecNumber>
    </recommendedName>
    <alternativeName>
        <fullName>3beta_HSD domain-containing protein 1</fullName>
    </alternativeName>
</protein>
<comment type="function">
    <text evidence="3 4 5 6">Hydroxysteroid dehydrogenase involved in the biosynthesis of dafrachonic acids (PubMed:18495818, PubMed:20178781, PubMed:24411940). Catalyzes the dehydrogenation of cholesterol or its derivatives and the isomerization of the double carbon bond on the sterol ring. Modifies sterols into a Delta(4)-3-keto-sterols such as cholest-4-en-3-one, precursor of Delta(4)-dafachronic acid (PubMed:18495818). Contributes to the production of Delta(7)-dafachronic acid in the XXX cells (PubMed:24411940). Dafachronic acids act as ligands and bind directly to the nuclear hormone receptor (NHR) daf-12 suppressing dauer formation and inducing reproductive growth (PubMed:18495818, PubMed:24411940). Acts in parallel to AKT-1 to promote reproductive development via DAF-16/FoxO and DAF-12 (PubMed:20178781).</text>
</comment>
<comment type="catalytic activity">
    <reaction evidence="9">
        <text>a 3beta-hydroxy-Delta(5)-steroid + NAD(+) = a 3-oxo-Delta(5)-steroid + NADH + H(+)</text>
        <dbReference type="Rhea" id="RHEA:24076"/>
        <dbReference type="ChEBI" id="CHEBI:1722"/>
        <dbReference type="ChEBI" id="CHEBI:15378"/>
        <dbReference type="ChEBI" id="CHEBI:47907"/>
        <dbReference type="ChEBI" id="CHEBI:57540"/>
        <dbReference type="ChEBI" id="CHEBI:57945"/>
        <dbReference type="EC" id="1.1.1.145"/>
    </reaction>
    <physiologicalReaction direction="left-to-right" evidence="9">
        <dbReference type="Rhea" id="RHEA:24077"/>
    </physiologicalReaction>
</comment>
<comment type="catalytic activity">
    <reaction evidence="6">
        <text>cholesterol + NAD(+) = cholest-5-en-3-one + NADH + H(+)</text>
        <dbReference type="Rhea" id="RHEA:35459"/>
        <dbReference type="ChEBI" id="CHEBI:15378"/>
        <dbReference type="ChEBI" id="CHEBI:16113"/>
        <dbReference type="ChEBI" id="CHEBI:57540"/>
        <dbReference type="ChEBI" id="CHEBI:57945"/>
        <dbReference type="ChEBI" id="CHEBI:63906"/>
    </reaction>
    <physiologicalReaction direction="left-to-right" evidence="6">
        <dbReference type="Rhea" id="RHEA:35460"/>
    </physiologicalReaction>
</comment>
<comment type="catalytic activity">
    <reaction evidence="9">
        <text>a 3-oxo-Delta(5)-steroid = a 3-oxo-Delta(4)-steroid</text>
        <dbReference type="Rhea" id="RHEA:14709"/>
        <dbReference type="ChEBI" id="CHEBI:47907"/>
        <dbReference type="ChEBI" id="CHEBI:47909"/>
        <dbReference type="EC" id="5.3.3.1"/>
    </reaction>
    <physiologicalReaction direction="left-to-right" evidence="9">
        <dbReference type="Rhea" id="RHEA:14710"/>
    </physiologicalReaction>
</comment>
<comment type="catalytic activity">
    <reaction evidence="6">
        <text>cholest-5-en-3-one = cholest-4-en-3-one</text>
        <dbReference type="Rhea" id="RHEA:32187"/>
        <dbReference type="ChEBI" id="CHEBI:16175"/>
        <dbReference type="ChEBI" id="CHEBI:63906"/>
        <dbReference type="EC" id="5.3.3.1"/>
    </reaction>
    <physiologicalReaction direction="left-to-right" evidence="6">
        <dbReference type="Rhea" id="RHEA:32188"/>
    </physiologicalReaction>
</comment>
<comment type="pathway">
    <text evidence="3 4 5">Steroid hormone biosynthesis; dafachronic acid biosynthesis.</text>
</comment>
<comment type="subcellular location">
    <subcellularLocation>
        <location evidence="8">Membrane</location>
        <topology evidence="8">Multi-pass membrane protein</topology>
    </subcellularLocation>
</comment>
<comment type="tissue specificity">
    <text evidence="3">Expressed exclusively in the neuron-like XXX(L/R) cells through all four larval stages and becomes fainter in adults.</text>
</comment>
<comment type="disruption phenotype">
    <text evidence="3">Mutants are hypersensitive to pheromone induction and form dauers more readily than the wild-type.</text>
</comment>
<comment type="similarity">
    <text evidence="8">Belongs to the 3-beta-HSD family.</text>
</comment>
<comment type="caution">
    <text evidence="5">Although thought to contribute to D(4)-dafrachronic acid biosynthesis, the latter may not be present at physiologically relevant concentrations in C.elegans and comparative metabolomics would indicate 7-dehydrogenase activity and participation in D(7)-dafrachronic acid biosynthesis instead.</text>
</comment>
<reference evidence="11" key="1">
    <citation type="journal article" date="1998" name="Science">
        <title>Genome sequence of the nematode C. elegans: a platform for investigating biology.</title>
        <authorList>
            <consortium name="The C. elegans sequencing consortium"/>
        </authorList>
    </citation>
    <scope>NUCLEOTIDE SEQUENCE [LARGE SCALE GENOMIC DNA]</scope>
    <source>
        <strain evidence="11">Bristol N2</strain>
    </source>
</reference>
<reference key="2">
    <citation type="journal article" date="2008" name="Development">
        <title>Genetic identification of HSD-1, a conserved steroidogenic enzyme that directs larval development in Caenorhabditis elegans.</title>
        <authorList>
            <person name="Patel D.S."/>
            <person name="Fang L.L."/>
            <person name="Svy D.K."/>
            <person name="Ruvkun G."/>
            <person name="Li W."/>
        </authorList>
    </citation>
    <scope>FUNCTION</scope>
    <scope>CATALYTIC ACTIVITY</scope>
    <scope>PATHWAY</scope>
    <scope>TISSUE SPECIFICITY</scope>
    <scope>DISRUPTION PHENOTYPE</scope>
</reference>
<reference key="3">
    <citation type="journal article" date="2010" name="Dev. Biol.">
        <title>Functional divergence of dafachronic acid pathways in the control of C. elegans development and lifespan.</title>
        <authorList>
            <person name="Dumas K.J."/>
            <person name="Guo C."/>
            <person name="Wang X."/>
            <person name="Burkhart K.B."/>
            <person name="Adams E.J."/>
            <person name="Alam H."/>
            <person name="Hu P.J."/>
        </authorList>
    </citation>
    <scope>FUNCTION</scope>
    <scope>PATHWAY</scope>
</reference>
<reference key="4">
    <citation type="journal article" date="2014" name="Cell Metab.">
        <title>Comparative metabolomics reveals endogenous ligands of DAF-12, a nuclear hormone receptor, regulating C. elegans development and lifespan.</title>
        <authorList>
            <person name="Mahanti P."/>
            <person name="Bose N."/>
            <person name="Bethke A."/>
            <person name="Judkins J.C."/>
            <person name="Wollam J."/>
            <person name="Dumas K.J."/>
            <person name="Zimmerman A.M."/>
            <person name="Campbell S.L."/>
            <person name="Hu P.J."/>
            <person name="Antebi A."/>
            <person name="Schroeder F.C."/>
        </authorList>
    </citation>
    <scope>FUNCTION</scope>
    <scope>PATHWAY</scope>
</reference>
<dbReference type="EC" id="1.1.1.145" evidence="9"/>
<dbReference type="EC" id="5.3.3.1" evidence="9"/>
<dbReference type="EMBL" id="BX284601">
    <property type="protein sequence ID" value="CAA21722.1"/>
    <property type="molecule type" value="Genomic_DNA"/>
</dbReference>
<dbReference type="PIR" id="T27323">
    <property type="entry name" value="T27323"/>
</dbReference>
<dbReference type="RefSeq" id="NP_493402.1">
    <property type="nucleotide sequence ID" value="NM_061001.1"/>
</dbReference>
<dbReference type="FunCoup" id="Q9XWF0">
    <property type="interactions" value="577"/>
</dbReference>
<dbReference type="STRING" id="6239.Y6B3B.11.1"/>
<dbReference type="SwissLipids" id="SLP:000000034"/>
<dbReference type="PaxDb" id="6239-Y6B3B.11"/>
<dbReference type="EnsemblMetazoa" id="Y6B3B.11.1">
    <property type="protein sequence ID" value="Y6B3B.11.1"/>
    <property type="gene ID" value="WBGene00012394"/>
</dbReference>
<dbReference type="GeneID" id="189371"/>
<dbReference type="KEGG" id="cel:CELE_Y6B3B.11"/>
<dbReference type="UCSC" id="Y6B3B.11">
    <property type="organism name" value="c. elegans"/>
</dbReference>
<dbReference type="AGR" id="WB:WBGene00012394"/>
<dbReference type="CTD" id="189371"/>
<dbReference type="WormBase" id="Y6B3B.11">
    <property type="protein sequence ID" value="CE20185"/>
    <property type="gene ID" value="WBGene00012394"/>
    <property type="gene designation" value="hsd-1"/>
</dbReference>
<dbReference type="eggNOG" id="KOG1430">
    <property type="taxonomic scope" value="Eukaryota"/>
</dbReference>
<dbReference type="HOGENOM" id="CLU_007383_6_8_1"/>
<dbReference type="InParanoid" id="Q9XWF0"/>
<dbReference type="OMA" id="YCESKAH"/>
<dbReference type="OrthoDB" id="2735536at2759"/>
<dbReference type="PhylomeDB" id="Q9XWF0"/>
<dbReference type="Reactome" id="R-CEL-191273">
    <property type="pathway name" value="Cholesterol biosynthesis"/>
</dbReference>
<dbReference type="UniPathway" id="UPA01020"/>
<dbReference type="PRO" id="PR:Q9XWF0"/>
<dbReference type="Proteomes" id="UP000001940">
    <property type="component" value="Chromosome I"/>
</dbReference>
<dbReference type="GO" id="GO:0016020">
    <property type="term" value="C:membrane"/>
    <property type="evidence" value="ECO:0007669"/>
    <property type="project" value="UniProtKB-SubCell"/>
</dbReference>
<dbReference type="GO" id="GO:0003854">
    <property type="term" value="F:3-beta-hydroxy-Delta5-steroid dehydrogenase (NAD+) activity"/>
    <property type="evidence" value="ECO:0000315"/>
    <property type="project" value="WormBase"/>
</dbReference>
<dbReference type="GO" id="GO:0016616">
    <property type="term" value="F:oxidoreductase activity, acting on the CH-OH group of donors, NAD or NADP as acceptor"/>
    <property type="evidence" value="ECO:0000318"/>
    <property type="project" value="GO_Central"/>
</dbReference>
<dbReference type="GO" id="GO:0004769">
    <property type="term" value="F:steroid Delta-isomerase activity"/>
    <property type="evidence" value="ECO:0007669"/>
    <property type="project" value="UniProtKB-EC"/>
</dbReference>
<dbReference type="GO" id="GO:0008203">
    <property type="term" value="P:cholesterol metabolic process"/>
    <property type="evidence" value="ECO:0007669"/>
    <property type="project" value="UniProtKB-KW"/>
</dbReference>
<dbReference type="GO" id="GO:0002119">
    <property type="term" value="P:nematode larval development"/>
    <property type="evidence" value="ECO:0000316"/>
    <property type="project" value="WormBase"/>
</dbReference>
<dbReference type="GO" id="GO:0016126">
    <property type="term" value="P:sterol biosynthetic process"/>
    <property type="evidence" value="ECO:0000315"/>
    <property type="project" value="WormBase"/>
</dbReference>
<dbReference type="FunFam" id="3.40.50.720:FF:000871">
    <property type="entry name" value="HydroxySteroid Dehydrogenase homolog"/>
    <property type="match status" value="1"/>
</dbReference>
<dbReference type="Gene3D" id="3.40.50.720">
    <property type="entry name" value="NAD(P)-binding Rossmann-like Domain"/>
    <property type="match status" value="1"/>
</dbReference>
<dbReference type="InterPro" id="IPR002225">
    <property type="entry name" value="3Beta_OHSteriod_DH/Estase"/>
</dbReference>
<dbReference type="InterPro" id="IPR050177">
    <property type="entry name" value="Lipid_A_modif_metabolic_enz"/>
</dbReference>
<dbReference type="InterPro" id="IPR036291">
    <property type="entry name" value="NAD(P)-bd_dom_sf"/>
</dbReference>
<dbReference type="PANTHER" id="PTHR43245">
    <property type="entry name" value="BIFUNCTIONAL POLYMYXIN RESISTANCE PROTEIN ARNA"/>
    <property type="match status" value="1"/>
</dbReference>
<dbReference type="PANTHER" id="PTHR43245:SF51">
    <property type="entry name" value="SHORT CHAIN DEHYDROGENASE_REDUCTASE FAMILY 42E, MEMBER 2"/>
    <property type="match status" value="1"/>
</dbReference>
<dbReference type="Pfam" id="PF01073">
    <property type="entry name" value="3Beta_HSD"/>
    <property type="match status" value="1"/>
</dbReference>
<dbReference type="SUPFAM" id="SSF51735">
    <property type="entry name" value="NAD(P)-binding Rossmann-fold domains"/>
    <property type="match status" value="1"/>
</dbReference>
<evidence type="ECO:0000250" key="1">
    <source>
        <dbReference type="UniProtKB" id="Q12068"/>
    </source>
</evidence>
<evidence type="ECO:0000255" key="2"/>
<evidence type="ECO:0000269" key="3">
    <source>
    </source>
</evidence>
<evidence type="ECO:0000269" key="4">
    <source>
    </source>
</evidence>
<evidence type="ECO:0000269" key="5">
    <source>
    </source>
</evidence>
<evidence type="ECO:0000303" key="6">
    <source>
    </source>
</evidence>
<evidence type="ECO:0000303" key="7">
    <source>
    </source>
</evidence>
<evidence type="ECO:0000305" key="8"/>
<evidence type="ECO:0000305" key="9">
    <source>
    </source>
</evidence>
<evidence type="ECO:0000312" key="10">
    <source>
        <dbReference type="EMBL" id="CAA21722.1"/>
    </source>
</evidence>
<evidence type="ECO:0000312" key="11">
    <source>
        <dbReference type="Proteomes" id="UP000001940"/>
    </source>
</evidence>
<evidence type="ECO:0000312" key="12">
    <source>
        <dbReference type="WormBase" id="Y6B3B.11"/>
    </source>
</evidence>
<proteinExistence type="evidence at protein level"/>
<accession>Q9XWF0</accession>
<organism>
    <name type="scientific">Caenorhabditis elegans</name>
    <dbReference type="NCBI Taxonomy" id="6239"/>
    <lineage>
        <taxon>Eukaryota</taxon>
        <taxon>Metazoa</taxon>
        <taxon>Ecdysozoa</taxon>
        <taxon>Nematoda</taxon>
        <taxon>Chromadorea</taxon>
        <taxon>Rhabditida</taxon>
        <taxon>Rhabditina</taxon>
        <taxon>Rhabditomorpha</taxon>
        <taxon>Rhabditoidea</taxon>
        <taxon>Rhabditidae</taxon>
        <taxon>Peloderinae</taxon>
        <taxon>Caenorhabditis</taxon>
    </lineage>
</organism>
<keyword id="KW-0153">Cholesterol metabolism</keyword>
<keyword id="KW-0413">Isomerase</keyword>
<keyword id="KW-0443">Lipid metabolism</keyword>
<keyword id="KW-0472">Membrane</keyword>
<keyword id="KW-0520">NAD</keyword>
<keyword id="KW-0560">Oxidoreductase</keyword>
<keyword id="KW-1185">Reference proteome</keyword>
<keyword id="KW-0753">Steroid metabolism</keyword>
<keyword id="KW-1207">Sterol metabolism</keyword>
<keyword id="KW-0812">Transmembrane</keyword>
<keyword id="KW-1133">Transmembrane helix</keyword>